<dbReference type="EMBL" id="CP000860">
    <property type="protein sequence ID" value="ACA59029.1"/>
    <property type="molecule type" value="Genomic_DNA"/>
</dbReference>
<dbReference type="RefSeq" id="WP_012301618.1">
    <property type="nucleotide sequence ID" value="NC_010424.1"/>
</dbReference>
<dbReference type="SMR" id="B1I1S7"/>
<dbReference type="STRING" id="477974.Daud_0483"/>
<dbReference type="KEGG" id="dau:Daud_0483"/>
<dbReference type="eggNOG" id="COG1381">
    <property type="taxonomic scope" value="Bacteria"/>
</dbReference>
<dbReference type="HOGENOM" id="CLU_066632_3_0_9"/>
<dbReference type="Proteomes" id="UP000008544">
    <property type="component" value="Chromosome"/>
</dbReference>
<dbReference type="GO" id="GO:0043590">
    <property type="term" value="C:bacterial nucleoid"/>
    <property type="evidence" value="ECO:0007669"/>
    <property type="project" value="TreeGrafter"/>
</dbReference>
<dbReference type="GO" id="GO:0006310">
    <property type="term" value="P:DNA recombination"/>
    <property type="evidence" value="ECO:0007669"/>
    <property type="project" value="UniProtKB-UniRule"/>
</dbReference>
<dbReference type="GO" id="GO:0006302">
    <property type="term" value="P:double-strand break repair"/>
    <property type="evidence" value="ECO:0007669"/>
    <property type="project" value="TreeGrafter"/>
</dbReference>
<dbReference type="Gene3D" id="2.40.50.140">
    <property type="entry name" value="Nucleic acid-binding proteins"/>
    <property type="match status" value="1"/>
</dbReference>
<dbReference type="Gene3D" id="1.20.1440.120">
    <property type="entry name" value="Recombination protein O, C-terminal domain"/>
    <property type="match status" value="1"/>
</dbReference>
<dbReference type="HAMAP" id="MF_00201">
    <property type="entry name" value="RecO"/>
    <property type="match status" value="1"/>
</dbReference>
<dbReference type="InterPro" id="IPR037278">
    <property type="entry name" value="ARFGAP/RecO"/>
</dbReference>
<dbReference type="InterPro" id="IPR022572">
    <property type="entry name" value="DNA_rep/recomb_RecO_N"/>
</dbReference>
<dbReference type="InterPro" id="IPR012340">
    <property type="entry name" value="NA-bd_OB-fold"/>
</dbReference>
<dbReference type="InterPro" id="IPR003717">
    <property type="entry name" value="RecO"/>
</dbReference>
<dbReference type="InterPro" id="IPR042242">
    <property type="entry name" value="RecO_C"/>
</dbReference>
<dbReference type="NCBIfam" id="TIGR00613">
    <property type="entry name" value="reco"/>
    <property type="match status" value="1"/>
</dbReference>
<dbReference type="PANTHER" id="PTHR33991">
    <property type="entry name" value="DNA REPAIR PROTEIN RECO"/>
    <property type="match status" value="1"/>
</dbReference>
<dbReference type="PANTHER" id="PTHR33991:SF1">
    <property type="entry name" value="DNA REPAIR PROTEIN RECO"/>
    <property type="match status" value="1"/>
</dbReference>
<dbReference type="Pfam" id="PF02565">
    <property type="entry name" value="RecO_C"/>
    <property type="match status" value="1"/>
</dbReference>
<dbReference type="Pfam" id="PF11967">
    <property type="entry name" value="RecO_N"/>
    <property type="match status" value="1"/>
</dbReference>
<dbReference type="SUPFAM" id="SSF57863">
    <property type="entry name" value="ArfGap/RecO-like zinc finger"/>
    <property type="match status" value="1"/>
</dbReference>
<dbReference type="SUPFAM" id="SSF50249">
    <property type="entry name" value="Nucleic acid-binding proteins"/>
    <property type="match status" value="1"/>
</dbReference>
<keyword id="KW-0227">DNA damage</keyword>
<keyword id="KW-0233">DNA recombination</keyword>
<keyword id="KW-0234">DNA repair</keyword>
<keyword id="KW-1185">Reference proteome</keyword>
<proteinExistence type="inferred from homology"/>
<evidence type="ECO:0000255" key="1">
    <source>
        <dbReference type="HAMAP-Rule" id="MF_00201"/>
    </source>
</evidence>
<sequence>MKQYQTEAIVLRASAVREADRTLVLLTRDRGKLRVWAHGAARPTSRKRGAVQPFCRSRFLLERGREIDVVRQAEALEEFPALHADLEALALAGYVCELAEGFAAEGQAEPGIYGLLLQVLRRLAEDKSGLPVRFFEARILALTGFGPELGSCAGCGAQPVVPARFSPALGGVLCRGCRDRDPPARPCRSAVVQVLGKLLEWPLDRLKVLRIDAATGREVADILQACVCHHLEREPRSLAFLRKMGISSS</sequence>
<protein>
    <recommendedName>
        <fullName evidence="1">DNA repair protein RecO</fullName>
    </recommendedName>
    <alternativeName>
        <fullName evidence="1">Recombination protein O</fullName>
    </alternativeName>
</protein>
<gene>
    <name evidence="1" type="primary">recO</name>
    <name type="ordered locus">Daud_0483</name>
</gene>
<accession>B1I1S7</accession>
<name>RECO_DESAP</name>
<comment type="function">
    <text evidence="1">Involved in DNA repair and RecF pathway recombination.</text>
</comment>
<comment type="similarity">
    <text evidence="1">Belongs to the RecO family.</text>
</comment>
<feature type="chain" id="PRO_1000099377" description="DNA repair protein RecO">
    <location>
        <begin position="1"/>
        <end position="249"/>
    </location>
</feature>
<reference key="1">
    <citation type="submission" date="2007-10" db="EMBL/GenBank/DDBJ databases">
        <title>Complete sequence of chromosome of Desulforudis audaxviator MP104C.</title>
        <authorList>
            <person name="Copeland A."/>
            <person name="Lucas S."/>
            <person name="Lapidus A."/>
            <person name="Barry K."/>
            <person name="Glavina del Rio T."/>
            <person name="Dalin E."/>
            <person name="Tice H."/>
            <person name="Bruce D."/>
            <person name="Pitluck S."/>
            <person name="Lowry S.R."/>
            <person name="Larimer F."/>
            <person name="Land M.L."/>
            <person name="Hauser L."/>
            <person name="Kyrpides N."/>
            <person name="Ivanova N.N."/>
            <person name="Richardson P."/>
        </authorList>
    </citation>
    <scope>NUCLEOTIDE SEQUENCE [LARGE SCALE GENOMIC DNA]</scope>
    <source>
        <strain>MP104C</strain>
    </source>
</reference>
<organism>
    <name type="scientific">Desulforudis audaxviator (strain MP104C)</name>
    <dbReference type="NCBI Taxonomy" id="477974"/>
    <lineage>
        <taxon>Bacteria</taxon>
        <taxon>Bacillati</taxon>
        <taxon>Bacillota</taxon>
        <taxon>Clostridia</taxon>
        <taxon>Thermoanaerobacterales</taxon>
        <taxon>Candidatus Desulforudaceae</taxon>
        <taxon>Candidatus Desulforudis</taxon>
    </lineage>
</organism>